<accession>A8C7R3</accession>
<protein>
    <recommendedName>
        <fullName evidence="3">Probable inactive dehydrogenase easA</fullName>
    </recommendedName>
    <alternativeName>
        <fullName evidence="5">Ergot alkaloid biosynthesis protein A</fullName>
    </alternativeName>
</protein>
<proteinExistence type="inferred from homology"/>
<comment type="function">
    <text evidence="3 4">Probable inactive dehydrogenase; part of the gene cluster that mediates the biosynthesis of fungal ergot alkaloid (PubMed:17720822). DmaW catalyzes the first step of ergot alkaloid biosynthesis by condensing dimethylallyl diphosphate (DMAP) and tryptophan to form 4-dimethylallyl-L-tryptophan (By similarity). The second step is catalyzed by the methyltransferase easF that methylates 4-dimethylallyl-L-tryptophan in the presence of S-adenosyl-L-methionine, resulting in the formation of 4-dimethylallyl-L-abrine (By similarity). The catalase easC and the FAD-dependent oxidoreductase easE then transform 4-dimethylallyl-L-abrine to chanoclavine-I which is further oxidized by easD in the presence of NAD(+), resulting in the formation of chanoclavine-I aldehyde (By similarity). Agroclavine dehydrogenase easG then mediates the conversion of chanoclavine-I aldehyde to agroclavine via a non-enzymatic adduct reaction: the substrate is an iminium intermediate that is formed spontaneously from chanoclavine-I aldehyde in the presence of glutathione (By similarity). Further conversion of agroclavine to paspalic acid is a two-step process involving oxidation of agroclavine to elymoclavine and of elymoclavine to paspalic acid, the second step being performed by the elymoclavine oxidase cloA (PubMed:17720822). However, cloA does not encode a functional enzyme indicating that C.fusiformis terminates its ergot alkaloid pathway at elymoclavine (PubMed:17720822).</text>
</comment>
<comment type="similarity">
    <text evidence="6">Belongs to the NADH:flavin oxidoreductase/NADH oxidase family.</text>
</comment>
<comment type="caution">
    <text evidence="6">In contrast to other members of the family, lacks the conserved Tyr active site at position 176 which is replaced by a Phe residue.</text>
</comment>
<feature type="chain" id="PRO_0000439119" description="Probable inactive dehydrogenase easA">
    <location>
        <begin position="1"/>
        <end position="382"/>
    </location>
</feature>
<feature type="binding site" evidence="2">
    <location>
        <begin position="25"/>
        <end position="27"/>
    </location>
    <ligand>
        <name>FMN</name>
        <dbReference type="ChEBI" id="CHEBI:58210"/>
    </ligand>
</feature>
<feature type="binding site" evidence="2">
    <location>
        <position position="60"/>
    </location>
    <ligand>
        <name>FMN</name>
        <dbReference type="ChEBI" id="CHEBI:58210"/>
    </ligand>
</feature>
<feature type="binding site" evidence="2">
    <location>
        <position position="102"/>
    </location>
    <ligand>
        <name>FMN</name>
        <dbReference type="ChEBI" id="CHEBI:58210"/>
    </ligand>
</feature>
<feature type="binding site" evidence="2">
    <location>
        <position position="171"/>
    </location>
    <ligand>
        <name>FMN</name>
        <dbReference type="ChEBI" id="CHEBI:58210"/>
    </ligand>
</feature>
<feature type="binding site" evidence="1">
    <location>
        <position position="171"/>
    </location>
    <ligand>
        <name>substrate</name>
    </ligand>
</feature>
<feature type="binding site" evidence="1">
    <location>
        <position position="174"/>
    </location>
    <ligand>
        <name>substrate</name>
    </ligand>
</feature>
<feature type="binding site" evidence="2">
    <location>
        <position position="223"/>
    </location>
    <ligand>
        <name>FMN</name>
        <dbReference type="ChEBI" id="CHEBI:58210"/>
    </ligand>
</feature>
<feature type="binding site" evidence="2">
    <location>
        <position position="299"/>
    </location>
    <ligand>
        <name>FMN</name>
        <dbReference type="ChEBI" id="CHEBI:58210"/>
    </ligand>
</feature>
<feature type="binding site" evidence="2">
    <location>
        <begin position="324"/>
        <end position="325"/>
    </location>
    <ligand>
        <name>FMN</name>
        <dbReference type="ChEBI" id="CHEBI:58210"/>
    </ligand>
</feature>
<feature type="binding site" evidence="1">
    <location>
        <position position="325"/>
    </location>
    <ligand>
        <name>FMN</name>
        <dbReference type="ChEBI" id="CHEBI:58210"/>
    </ligand>
</feature>
<feature type="binding site" evidence="1">
    <location>
        <position position="352"/>
    </location>
    <ligand>
        <name>substrate</name>
    </ligand>
</feature>
<gene>
    <name evidence="5" type="primary">easA</name>
</gene>
<organism>
    <name type="scientific">Claviceps fusiformis</name>
    <name type="common">Ergot fungus</name>
    <dbReference type="NCBI Taxonomy" id="40602"/>
    <lineage>
        <taxon>Eukaryota</taxon>
        <taxon>Fungi</taxon>
        <taxon>Dikarya</taxon>
        <taxon>Ascomycota</taxon>
        <taxon>Pezizomycotina</taxon>
        <taxon>Sordariomycetes</taxon>
        <taxon>Hypocreomycetidae</taxon>
        <taxon>Hypocreales</taxon>
        <taxon>Clavicipitaceae</taxon>
        <taxon>Claviceps</taxon>
    </lineage>
</organism>
<sequence length="382" mass="42938">MSSSNLFKPIPLGRKVLQHKVVLSPMTRFRADNDGVPLSYVKSYYGQRASIRGTLLITEAVAICPRAKGFSNCPGIWHQDQIAAWKEVVDEVHSKGSVIWLQLWATGRASDADTLKESGFHLESSSDVPVAPGEPVPRPLSEDEIESYIRDYVTGAINAVQGAGFDGIEIHGANGFLVDQFLQASCNTRADQWGGSIENRSRFGLEITRRVVDAVGKDRVGVKLSPWSTFQGMGTMDDLVAQFEHFISRLREMDIAYIHLVNTRWLEEEEPGIKTHPDVDNQTFVRMWGNKTPILLAGGYDADSARRLVDETYSDQNNIMVVFGRHYISNPDLPFRLRLGIPLQKYNRDTFYIPFSDEGYLDYPFCQEFLDQQDVDQVVVAA</sequence>
<reference key="1">
    <citation type="journal article" date="2007" name="Appl. Environ. Microbiol.">
        <title>Comparison of ergot alkaloid biosynthesis gene clusters in Claviceps species indicates loss of late pathway steps in evolution of C. fusiformis.</title>
        <authorList>
            <person name="Lorenz N."/>
            <person name="Wilson E.V."/>
            <person name="Machado C."/>
            <person name="Schardl C.L."/>
            <person name="Tudzynski P."/>
        </authorList>
    </citation>
    <scope>NUCLEOTIDE SEQUENCE [GENOMIC DNA]</scope>
    <scope>FUNCTION</scope>
    <source>
        <strain>ATCC 26245 / DSM 2942 / CBS 164.59</strain>
    </source>
</reference>
<name>EASA_CLAFS</name>
<keyword id="KW-0285">Flavoprotein</keyword>
<keyword id="KW-0288">FMN</keyword>
<evidence type="ECO:0000250" key="1">
    <source>
        <dbReference type="UniProtKB" id="Q02899"/>
    </source>
</evidence>
<evidence type="ECO:0000250" key="2">
    <source>
        <dbReference type="UniProtKB" id="Q4WZ70"/>
    </source>
</evidence>
<evidence type="ECO:0000250" key="3">
    <source>
        <dbReference type="UniProtKB" id="Q6ZXC1"/>
    </source>
</evidence>
<evidence type="ECO:0000269" key="4">
    <source>
    </source>
</evidence>
<evidence type="ECO:0000303" key="5">
    <source>
    </source>
</evidence>
<evidence type="ECO:0000305" key="6"/>
<dbReference type="EMBL" id="EU006773">
    <property type="protein sequence ID" value="ABV57819.1"/>
    <property type="molecule type" value="Genomic_DNA"/>
</dbReference>
<dbReference type="SMR" id="A8C7R3"/>
<dbReference type="GO" id="GO:0010181">
    <property type="term" value="F:FMN binding"/>
    <property type="evidence" value="ECO:0007669"/>
    <property type="project" value="InterPro"/>
</dbReference>
<dbReference type="GO" id="GO:0003959">
    <property type="term" value="F:NADPH dehydrogenase activity"/>
    <property type="evidence" value="ECO:0007669"/>
    <property type="project" value="TreeGrafter"/>
</dbReference>
<dbReference type="CDD" id="cd02933">
    <property type="entry name" value="OYE_like_FMN"/>
    <property type="match status" value="1"/>
</dbReference>
<dbReference type="FunFam" id="3.20.20.70:FF:000138">
    <property type="entry name" value="NADPH dehydrogenase 1"/>
    <property type="match status" value="1"/>
</dbReference>
<dbReference type="Gene3D" id="3.20.20.70">
    <property type="entry name" value="Aldolase class I"/>
    <property type="match status" value="1"/>
</dbReference>
<dbReference type="InterPro" id="IPR013785">
    <property type="entry name" value="Aldolase_TIM"/>
</dbReference>
<dbReference type="InterPro" id="IPR001155">
    <property type="entry name" value="OxRdtase_FMN_N"/>
</dbReference>
<dbReference type="InterPro" id="IPR045247">
    <property type="entry name" value="Oye-like"/>
</dbReference>
<dbReference type="PANTHER" id="PTHR22893">
    <property type="entry name" value="NADH OXIDOREDUCTASE-RELATED"/>
    <property type="match status" value="1"/>
</dbReference>
<dbReference type="PANTHER" id="PTHR22893:SF91">
    <property type="entry name" value="NADPH DEHYDROGENASE 2-RELATED"/>
    <property type="match status" value="1"/>
</dbReference>
<dbReference type="Pfam" id="PF00724">
    <property type="entry name" value="Oxidored_FMN"/>
    <property type="match status" value="1"/>
</dbReference>
<dbReference type="SUPFAM" id="SSF51395">
    <property type="entry name" value="FMN-linked oxidoreductases"/>
    <property type="match status" value="1"/>
</dbReference>